<evidence type="ECO:0000255" key="1"/>
<evidence type="ECO:0000255" key="2">
    <source>
        <dbReference type="PROSITE-ProRule" id="PRU00258"/>
    </source>
</evidence>
<evidence type="ECO:0000255" key="3">
    <source>
        <dbReference type="PROSITE-ProRule" id="PRU01348"/>
    </source>
</evidence>
<evidence type="ECO:0000255" key="4">
    <source>
        <dbReference type="PROSITE-ProRule" id="PRU01363"/>
    </source>
</evidence>
<evidence type="ECO:0000256" key="5">
    <source>
        <dbReference type="SAM" id="MobiDB-lite"/>
    </source>
</evidence>
<evidence type="ECO:0000269" key="6">
    <source>
    </source>
</evidence>
<evidence type="ECO:0000303" key="7">
    <source>
    </source>
</evidence>
<evidence type="ECO:0000305" key="8"/>
<evidence type="ECO:0000305" key="9">
    <source>
    </source>
</evidence>
<evidence type="ECO:0000312" key="10">
    <source>
        <dbReference type="EMBL" id="CAO85897.1"/>
    </source>
</evidence>
<feature type="chain" id="PRO_0000461599" description="Spectinabilin polyketide synthase system protein NorB">
    <location>
        <begin position="1"/>
        <end position="2174"/>
    </location>
</feature>
<feature type="domain" description="Ketosynthase family 3 (KS3)" evidence="3">
    <location>
        <begin position="34"/>
        <end position="459"/>
    </location>
</feature>
<feature type="domain" description="Malonyl-CoA:ACP transacylase (MAT)" evidence="1">
    <location>
        <begin position="567"/>
        <end position="888"/>
    </location>
</feature>
<feature type="domain" description="PKS/mFAS DH" evidence="4">
    <location>
        <begin position="938"/>
        <end position="1212"/>
    </location>
</feature>
<feature type="domain" description="Enoyl reductase (ER)" evidence="1">
    <location>
        <begin position="1424"/>
        <end position="1726"/>
    </location>
</feature>
<feature type="domain" description="Ketoreductase (KR)" evidence="1">
    <location>
        <begin position="1736"/>
        <end position="1915"/>
    </location>
</feature>
<feature type="domain" description="Carrier" evidence="2">
    <location>
        <begin position="2017"/>
        <end position="2092"/>
    </location>
</feature>
<feature type="region of interest" description="N-terminal hotdog fold" evidence="4">
    <location>
        <begin position="938"/>
        <end position="1060"/>
    </location>
</feature>
<feature type="region of interest" description="Disordered" evidence="5">
    <location>
        <begin position="1056"/>
        <end position="1075"/>
    </location>
</feature>
<feature type="region of interest" description="C-terminal hotdog fold" evidence="4">
    <location>
        <begin position="1073"/>
        <end position="1212"/>
    </location>
</feature>
<feature type="compositionally biased region" description="Pro residues" evidence="5">
    <location>
        <begin position="1061"/>
        <end position="1074"/>
    </location>
</feature>
<feature type="active site" description="For beta-ketoacyl synthase activity" evidence="3">
    <location>
        <position position="206"/>
    </location>
</feature>
<feature type="active site" description="For beta-ketoacyl synthase activity" evidence="3">
    <location>
        <position position="341"/>
    </location>
</feature>
<feature type="active site" description="For beta-ketoacyl synthase activity" evidence="3">
    <location>
        <position position="381"/>
    </location>
</feature>
<feature type="active site" description="Proton acceptor; for dehydratase activity" evidence="4">
    <location>
        <position position="970"/>
    </location>
</feature>
<feature type="active site" description="Proton donor; for dehydratase activity" evidence="4">
    <location>
        <position position="1134"/>
    </location>
</feature>
<feature type="modified residue" description="O-(pantetheine 4'-phosphoryl)serine" evidence="2">
    <location>
        <position position="2052"/>
    </location>
</feature>
<reference evidence="10" key="1">
    <citation type="journal article" date="2007" name="ChemBioChem">
        <title>Non-colinear polyketide biosynthesis in the aureothin and neoaureothin pathways: an evolutionary perspective.</title>
        <authorList>
            <person name="Traitcheva N."/>
            <person name="Jenke-Kodama H."/>
            <person name="He J."/>
            <person name="Dittmann E."/>
            <person name="Hertweck C."/>
        </authorList>
    </citation>
    <scope>NUCLEOTIDE SEQUENCE [GENOMIC DNA]</scope>
    <scope>FUNCTION</scope>
    <scope>SUBUNIT</scope>
    <source>
        <strain>HKI-0260</strain>
    </source>
</reference>
<name>NORB_STRON</name>
<comment type="function">
    <text evidence="6">Component of a type I modular polyketide synthase (PKS) that generates the backbone of the antibiotic spectinabilin (also known as neoaureothin), a nitroaryl-substituted polyketide metabolite (PubMed:17763486). This PKS system accepts the unusual starter unit 4-nitrobenzoyl-CoA and extends it by 6 molecules of (S)-methylmalonyl-CoA and a single molecule of malonyl-CoA (PubMed:17763486).</text>
</comment>
<comment type="catalytic activity">
    <reaction evidence="9">
        <text>4-nitrobenzoyl-CoA + 6 (S)-methylmalonyl-CoA + malonyl-CoA + 6 NADPH + 12 H(+) = demethyldeoxyspectinabilin + 7 CO2 + 6 NADP(+) + 8 CoA + 5 H2O</text>
        <dbReference type="Rhea" id="RHEA:58944"/>
        <dbReference type="ChEBI" id="CHEBI:15377"/>
        <dbReference type="ChEBI" id="CHEBI:15378"/>
        <dbReference type="ChEBI" id="CHEBI:16526"/>
        <dbReference type="ChEBI" id="CHEBI:57287"/>
        <dbReference type="ChEBI" id="CHEBI:57327"/>
        <dbReference type="ChEBI" id="CHEBI:57384"/>
        <dbReference type="ChEBI" id="CHEBI:57783"/>
        <dbReference type="ChEBI" id="CHEBI:58349"/>
        <dbReference type="ChEBI" id="CHEBI:142871"/>
        <dbReference type="ChEBI" id="CHEBI:142872"/>
        <dbReference type="EC" id="2.3.1.290"/>
    </reaction>
    <physiologicalReaction direction="left-to-right" evidence="9">
        <dbReference type="Rhea" id="RHEA:58945"/>
    </physiologicalReaction>
</comment>
<comment type="cofactor">
    <cofactor evidence="2">
        <name>pantetheine 4'-phosphate</name>
        <dbReference type="ChEBI" id="CHEBI:47942"/>
    </cofactor>
</comment>
<comment type="pathway">
    <text evidence="9">Antibiotic biosynthesis.</text>
</comment>
<comment type="pathway">
    <text evidence="9">Polyketide biosynthesis.</text>
</comment>
<comment type="subunit">
    <text evidence="6">The spectinabilin polyketide synthase complex is composed of 4 proteins, NorA, NorA', NorB and NorC (PubMed:17763486). The complex comprises 6 modules with a total of 28 catalytic domains catalyzing 7 chain elongations (PubMed:17763486). NorA comprises one module, NorA' two modules, NorB one module and NorC two modules (PubMed:17763486).</text>
</comment>
<protein>
    <recommendedName>
        <fullName evidence="8">Spectinabilin polyketide synthase system protein NorB</fullName>
        <shortName evidence="8">Spectinabilin PKS system protein NorB</shortName>
        <ecNumber evidence="9">2.3.1.290</ecNumber>
    </recommendedName>
    <alternativeName>
        <fullName evidence="10">Modular polyketide synthase NorB</fullName>
    </alternativeName>
</protein>
<accession>B4ER96</accession>
<proteinExistence type="evidence at protein level"/>
<sequence>MPVGDDKLVEALRASLKETENLRARNRELRAAAREPVAVVAMGCRFPGGVKSPEDLWHLVAEGTDAISPFPADRGWDTDSLFDSDPGRPGHTYVLEGGFLDDAAEFDADLFGISPREAVAMDPQQRLLLETAWETFERAGINPASLRGRPVGTFVGSVLTTNGGGAEPAEGSEGHQLTGSAASVLSGRLAYTFGLEGPAVTVDTACSAALASVHLAVQALRQRECAMALAGGSAVLTTPGIFVEFSRQRGLAPDGRCKPFAAAADGTGWGEGVGLVLLERLSDARRRGHPVLAVIRGSAVNQDGASNGLTAPNGPSQQRVIRQALAAARLSADLVDAVEAHGTGTTLGDPIEAQALLATYGQDRPADRPLWLGSVKSNLGHTQGAAGIAGLIKMVLAMRHGVLPRTLHIDRPTPHVDWSSGAVRLLTENREWPPTGRPRRAAVSSFGISGTNAHVILEQAPAEGEMTDGPEGADIPAVGLPLVLSARGDRALRQQAERLAAHLRARSGLRPPDVGHSLVTSRATLDQRAVVWSGDRDGLLAGLDALAQDRPAPGLTRGTATEGALAFLFSGQGSQRPGMGRQLAGEFPVFAEALDEAAGHLDPRLDRPLREILHAEEGTPRAALLEQTAFTQAALFAYEMAMFRLLTHWGITPALLLGHSVGELAAAHAAGVFSLEDACTLVAARGRLMQRMPGTGAMVAIQATEAEVLPLVAARAGEISLAAVNGPCSVVVSGAEGAVLEVAGYWKERGRRTSRLRVSHAFHSPQMTGMLQEFGEVAGKLEFHPPRIPVVSNLTGEIATDEQLCSPEYWVRHAQAPVRFHTGMRALVAAGVRTFMEVGPSGTLTAMAQDCLAEQPAATGAVVIPVARSGRPETGTTLAAVSRAFVQGTPVDWTRFFPQTGNRRVELPTYPFQRRGYPWSRASATAQVTAAGLAGLRHPLLGACLELADGQGTVFSGRLSRRTESWLAHHKVLGTALVPGTAIVEMALRAGTEARCGRLVELTQEAPLTLPDQGAVHLQVRVGAPGENGHRSLGVYSRPEEAPDWVCHARGQLAPEAAAPPAAPGEDWPPPGAEPVPLEGFYERLAAEGLDYGPAFRGLSRAWRLGEAVFAELALDRTARAGAGAYGVHPALLDSALHLALLDGALAGRSRLRIPFAWQDVSCHGAGAPALRARLTPAGTDSVSLALWDEHGAPVASVGSLVTRPITAGQLRATRTQDTLFHLNWAAAEPVPGAAPGCVVLGDDDLAAAVAAPGLPGPEALLAALDSGESIPGLVLLPCRAPDADTPDADDPLAAARSLTGRVLEVIHHWLTDARLTDSRLAVITRGALSAADGEPVTDPAAAALWGLVRSAQSEHPGRFLLADLDGHPGSTAALPAALSGNEPQLALREGRLLVPRLARGVPEGSLMPPPGAAEWRVAPAGGGTVDDLVLAPCPEAAAPLAPGQVRVAVRAAGLNFRDVVMALGMVADQRALGGEIAGVVTEVGPDVPGLAPGDRVFGLAAGCLGPVAVADHRLIAPMPPDWSFPQAAAVPVTFLTAFHGLVDLAGLRAGEKVLIHAAAGGVGIAAVQLARHLGAEVFATASPAKWDAVRALGVDEGHLASSRTGEFEARFAGSGGVDVVLNSLTGELLDASLRLLRPGGRFVEMGKTDIRDAARIAGEHQGVRYRAFDLMDAGPGRIAEMLAEILALFERGRLRPVPVRTWDVRQAPAAFRFLAQARNVGKLVLTMPPAWDPSGTILVTGGYGALGTEVARHLVRTGRARHLLLAGRRGPEAEGMAELTEELRKLGALSVRAVACDMAERASVAELLASVPAEHPLTAVVHTAGVVDDGLLESMTPRRLDTVFRPKADGAWHLHELTRDRELAAFVLFSSAAGTLGAAGQANYAAANAFLDALAAHRRDAGLPATALAWGMWAGTGGMAAALDRAGLDRVSRSGIAGLSTEDGLALFDAALAADRAVWLPIRFHTPALRTAAGQGSLPPLLRGLAGTPADPAAPAGAANALRERLAALAPGERRPAVRELVRGQVAAVLGHPTAETVDPQRPFKELGFDSLTAVELRNRLGAMTGLTLPSTLVFDHPTPDALTDAIEARLPAGPGAPAESFLARLDDWAAGLAAAPLDQDERERVAARLRALALRWEEGTRPQDTGPAVAGELDLATDEEVIDFISNELGIS</sequence>
<dbReference type="EC" id="2.3.1.290" evidence="9"/>
<dbReference type="EMBL" id="AM778535">
    <property type="protein sequence ID" value="CAO85897.1"/>
    <property type="molecule type" value="Genomic_DNA"/>
</dbReference>
<dbReference type="RefSeq" id="WP_109279744.1">
    <property type="nucleotide sequence ID" value="NZ_JBFAUK010000005.1"/>
</dbReference>
<dbReference type="KEGG" id="ag:CAO85897"/>
<dbReference type="OrthoDB" id="9778690at2"/>
<dbReference type="BioCyc" id="MetaCyc:MONOMER-20716"/>
<dbReference type="BRENDA" id="2.3.1.290">
    <property type="organism ID" value="16282"/>
</dbReference>
<dbReference type="GO" id="GO:0004315">
    <property type="term" value="F:3-oxoacyl-[acyl-carrier-protein] synthase activity"/>
    <property type="evidence" value="ECO:0007669"/>
    <property type="project" value="InterPro"/>
</dbReference>
<dbReference type="GO" id="GO:0004312">
    <property type="term" value="F:fatty acid synthase activity"/>
    <property type="evidence" value="ECO:0007669"/>
    <property type="project" value="TreeGrafter"/>
</dbReference>
<dbReference type="GO" id="GO:0016491">
    <property type="term" value="F:oxidoreductase activity"/>
    <property type="evidence" value="ECO:0007669"/>
    <property type="project" value="InterPro"/>
</dbReference>
<dbReference type="GO" id="GO:0031177">
    <property type="term" value="F:phosphopantetheine binding"/>
    <property type="evidence" value="ECO:0007669"/>
    <property type="project" value="InterPro"/>
</dbReference>
<dbReference type="GO" id="GO:0008270">
    <property type="term" value="F:zinc ion binding"/>
    <property type="evidence" value="ECO:0007669"/>
    <property type="project" value="InterPro"/>
</dbReference>
<dbReference type="GO" id="GO:0006633">
    <property type="term" value="P:fatty acid biosynthetic process"/>
    <property type="evidence" value="ECO:0007669"/>
    <property type="project" value="InterPro"/>
</dbReference>
<dbReference type="GO" id="GO:0033068">
    <property type="term" value="P:macrolide biosynthetic process"/>
    <property type="evidence" value="ECO:0007669"/>
    <property type="project" value="UniProtKB-ARBA"/>
</dbReference>
<dbReference type="CDD" id="cd05195">
    <property type="entry name" value="enoyl_red"/>
    <property type="match status" value="1"/>
</dbReference>
<dbReference type="CDD" id="cd08956">
    <property type="entry name" value="KR_3_FAS_SDR_x"/>
    <property type="match status" value="1"/>
</dbReference>
<dbReference type="CDD" id="cd00833">
    <property type="entry name" value="PKS"/>
    <property type="match status" value="1"/>
</dbReference>
<dbReference type="FunFam" id="3.40.50.720:FF:000209">
    <property type="entry name" value="Polyketide synthase Pks12"/>
    <property type="match status" value="1"/>
</dbReference>
<dbReference type="FunFam" id="3.40.47.10:FF:000019">
    <property type="entry name" value="Polyketide synthase type I"/>
    <property type="match status" value="1"/>
</dbReference>
<dbReference type="FunFam" id="3.40.366.10:FF:000002">
    <property type="entry name" value="Probable polyketide synthase 2"/>
    <property type="match status" value="1"/>
</dbReference>
<dbReference type="FunFam" id="3.90.180.10:FF:000032">
    <property type="entry name" value="Probable polyketide synthase pks1"/>
    <property type="match status" value="1"/>
</dbReference>
<dbReference type="FunFam" id="1.10.1200.10:FF:000007">
    <property type="entry name" value="Probable polyketide synthase pks17"/>
    <property type="match status" value="1"/>
</dbReference>
<dbReference type="Gene3D" id="3.30.70.3290">
    <property type="match status" value="1"/>
</dbReference>
<dbReference type="Gene3D" id="3.40.47.10">
    <property type="match status" value="1"/>
</dbReference>
<dbReference type="Gene3D" id="3.40.50.11460">
    <property type="match status" value="1"/>
</dbReference>
<dbReference type="Gene3D" id="1.10.1200.10">
    <property type="entry name" value="ACP-like"/>
    <property type="match status" value="1"/>
</dbReference>
<dbReference type="Gene3D" id="3.40.366.10">
    <property type="entry name" value="Malonyl-Coenzyme A Acyl Carrier Protein, domain 2"/>
    <property type="match status" value="1"/>
</dbReference>
<dbReference type="Gene3D" id="3.90.180.10">
    <property type="entry name" value="Medium-chain alcohol dehydrogenases, catalytic domain"/>
    <property type="match status" value="1"/>
</dbReference>
<dbReference type="Gene3D" id="3.40.50.720">
    <property type="entry name" value="NAD(P)-binding Rossmann-like Domain"/>
    <property type="match status" value="1"/>
</dbReference>
<dbReference type="Gene3D" id="3.10.129.110">
    <property type="entry name" value="Polyketide synthase dehydratase"/>
    <property type="match status" value="1"/>
</dbReference>
<dbReference type="InterPro" id="IPR001227">
    <property type="entry name" value="Ac_transferase_dom_sf"/>
</dbReference>
<dbReference type="InterPro" id="IPR036736">
    <property type="entry name" value="ACP-like_sf"/>
</dbReference>
<dbReference type="InterPro" id="IPR014043">
    <property type="entry name" value="Acyl_transferase_dom"/>
</dbReference>
<dbReference type="InterPro" id="IPR016035">
    <property type="entry name" value="Acyl_Trfase/lysoPLipase"/>
</dbReference>
<dbReference type="InterPro" id="IPR013154">
    <property type="entry name" value="ADH-like_N"/>
</dbReference>
<dbReference type="InterPro" id="IPR011032">
    <property type="entry name" value="GroES-like_sf"/>
</dbReference>
<dbReference type="InterPro" id="IPR018201">
    <property type="entry name" value="Ketoacyl_synth_AS"/>
</dbReference>
<dbReference type="InterPro" id="IPR014031">
    <property type="entry name" value="Ketoacyl_synth_C"/>
</dbReference>
<dbReference type="InterPro" id="IPR014030">
    <property type="entry name" value="Ketoacyl_synth_N"/>
</dbReference>
<dbReference type="InterPro" id="IPR016036">
    <property type="entry name" value="Malonyl_transacylase_ACP-bd"/>
</dbReference>
<dbReference type="InterPro" id="IPR036291">
    <property type="entry name" value="NAD(P)-bd_dom_sf"/>
</dbReference>
<dbReference type="InterPro" id="IPR015083">
    <property type="entry name" value="NorB/c/GfsB-D-like_docking"/>
</dbReference>
<dbReference type="InterPro" id="IPR032821">
    <property type="entry name" value="PKS_assoc"/>
</dbReference>
<dbReference type="InterPro" id="IPR020841">
    <property type="entry name" value="PKS_Beta-ketoAc_synthase_dom"/>
</dbReference>
<dbReference type="InterPro" id="IPR042104">
    <property type="entry name" value="PKS_dehydratase_sf"/>
</dbReference>
<dbReference type="InterPro" id="IPR020807">
    <property type="entry name" value="PKS_DH"/>
</dbReference>
<dbReference type="InterPro" id="IPR049551">
    <property type="entry name" value="PKS_DH_C"/>
</dbReference>
<dbReference type="InterPro" id="IPR049552">
    <property type="entry name" value="PKS_DH_N"/>
</dbReference>
<dbReference type="InterPro" id="IPR020843">
    <property type="entry name" value="PKS_ER"/>
</dbReference>
<dbReference type="InterPro" id="IPR013968">
    <property type="entry name" value="PKS_KR"/>
</dbReference>
<dbReference type="InterPro" id="IPR049900">
    <property type="entry name" value="PKS_mFAS_DH"/>
</dbReference>
<dbReference type="InterPro" id="IPR050091">
    <property type="entry name" value="PKS_NRPS_Biosynth_Enz"/>
</dbReference>
<dbReference type="InterPro" id="IPR020806">
    <property type="entry name" value="PKS_PP-bd"/>
</dbReference>
<dbReference type="InterPro" id="IPR009081">
    <property type="entry name" value="PP-bd_ACP"/>
</dbReference>
<dbReference type="InterPro" id="IPR006162">
    <property type="entry name" value="Ppantetheine_attach_site"/>
</dbReference>
<dbReference type="InterPro" id="IPR002364">
    <property type="entry name" value="Quin_OxRdtase/zeta-crystal_CS"/>
</dbReference>
<dbReference type="InterPro" id="IPR055123">
    <property type="entry name" value="SpnB-like_Rossmann"/>
</dbReference>
<dbReference type="InterPro" id="IPR016039">
    <property type="entry name" value="Thiolase-like"/>
</dbReference>
<dbReference type="PANTHER" id="PTHR43775">
    <property type="entry name" value="FATTY ACID SYNTHASE"/>
    <property type="match status" value="1"/>
</dbReference>
<dbReference type="PANTHER" id="PTHR43775:SF51">
    <property type="entry name" value="INACTIVE PHENOLPHTHIOCEROL SYNTHESIS POLYKETIDE SYNTHASE TYPE I PKS1-RELATED"/>
    <property type="match status" value="1"/>
</dbReference>
<dbReference type="Pfam" id="PF00698">
    <property type="entry name" value="Acyl_transf_1"/>
    <property type="match status" value="1"/>
</dbReference>
<dbReference type="Pfam" id="PF08240">
    <property type="entry name" value="ADH_N"/>
    <property type="match status" value="1"/>
</dbReference>
<dbReference type="Pfam" id="PF13602">
    <property type="entry name" value="ADH_zinc_N_2"/>
    <property type="match status" value="1"/>
</dbReference>
<dbReference type="Pfam" id="PF08990">
    <property type="entry name" value="Docking"/>
    <property type="match status" value="1"/>
</dbReference>
<dbReference type="Pfam" id="PF16197">
    <property type="entry name" value="KAsynt_C_assoc"/>
    <property type="match status" value="1"/>
</dbReference>
<dbReference type="Pfam" id="PF00109">
    <property type="entry name" value="ketoacyl-synt"/>
    <property type="match status" value="1"/>
</dbReference>
<dbReference type="Pfam" id="PF02801">
    <property type="entry name" value="Ketoacyl-synt_C"/>
    <property type="match status" value="1"/>
</dbReference>
<dbReference type="Pfam" id="PF08659">
    <property type="entry name" value="KR"/>
    <property type="match status" value="1"/>
</dbReference>
<dbReference type="Pfam" id="PF21089">
    <property type="entry name" value="PKS_DH_N"/>
    <property type="match status" value="1"/>
</dbReference>
<dbReference type="Pfam" id="PF00550">
    <property type="entry name" value="PP-binding"/>
    <property type="match status" value="1"/>
</dbReference>
<dbReference type="Pfam" id="PF14765">
    <property type="entry name" value="PS-DH"/>
    <property type="match status" value="1"/>
</dbReference>
<dbReference type="Pfam" id="PF22953">
    <property type="entry name" value="SpnB_Rossmann"/>
    <property type="match status" value="1"/>
</dbReference>
<dbReference type="SMART" id="SM00827">
    <property type="entry name" value="PKS_AT"/>
    <property type="match status" value="1"/>
</dbReference>
<dbReference type="SMART" id="SM00826">
    <property type="entry name" value="PKS_DH"/>
    <property type="match status" value="1"/>
</dbReference>
<dbReference type="SMART" id="SM00829">
    <property type="entry name" value="PKS_ER"/>
    <property type="match status" value="1"/>
</dbReference>
<dbReference type="SMART" id="SM00822">
    <property type="entry name" value="PKS_KR"/>
    <property type="match status" value="1"/>
</dbReference>
<dbReference type="SMART" id="SM00825">
    <property type="entry name" value="PKS_KS"/>
    <property type="match status" value="1"/>
</dbReference>
<dbReference type="SMART" id="SM00823">
    <property type="entry name" value="PKS_PP"/>
    <property type="match status" value="1"/>
</dbReference>
<dbReference type="SMART" id="SM01294">
    <property type="entry name" value="PKS_PP_betabranch"/>
    <property type="match status" value="1"/>
</dbReference>
<dbReference type="SUPFAM" id="SSF47336">
    <property type="entry name" value="ACP-like"/>
    <property type="match status" value="1"/>
</dbReference>
<dbReference type="SUPFAM" id="SSF52151">
    <property type="entry name" value="FabD/lysophospholipase-like"/>
    <property type="match status" value="1"/>
</dbReference>
<dbReference type="SUPFAM" id="SSF50129">
    <property type="entry name" value="GroES-like"/>
    <property type="match status" value="1"/>
</dbReference>
<dbReference type="SUPFAM" id="SSF51735">
    <property type="entry name" value="NAD(P)-binding Rossmann-fold domains"/>
    <property type="match status" value="3"/>
</dbReference>
<dbReference type="SUPFAM" id="SSF55048">
    <property type="entry name" value="Probable ACP-binding domain of malonyl-CoA ACP transacylase"/>
    <property type="match status" value="1"/>
</dbReference>
<dbReference type="SUPFAM" id="SSF53901">
    <property type="entry name" value="Thiolase-like"/>
    <property type="match status" value="1"/>
</dbReference>
<dbReference type="PROSITE" id="PS50075">
    <property type="entry name" value="CARRIER"/>
    <property type="match status" value="1"/>
</dbReference>
<dbReference type="PROSITE" id="PS00606">
    <property type="entry name" value="KS3_1"/>
    <property type="match status" value="1"/>
</dbReference>
<dbReference type="PROSITE" id="PS52004">
    <property type="entry name" value="KS3_2"/>
    <property type="match status" value="1"/>
</dbReference>
<dbReference type="PROSITE" id="PS00012">
    <property type="entry name" value="PHOSPHOPANTETHEINE"/>
    <property type="match status" value="1"/>
</dbReference>
<dbReference type="PROSITE" id="PS52019">
    <property type="entry name" value="PKS_MFAS_DH"/>
    <property type="match status" value="1"/>
</dbReference>
<dbReference type="PROSITE" id="PS01162">
    <property type="entry name" value="QOR_ZETA_CRYSTAL"/>
    <property type="match status" value="1"/>
</dbReference>
<keyword id="KW-0012">Acyltransferase</keyword>
<keyword id="KW-0045">Antibiotic biosynthesis</keyword>
<keyword id="KW-0511">Multifunctional enzyme</keyword>
<keyword id="KW-0596">Phosphopantetheine</keyword>
<keyword id="KW-0597">Phosphoprotein</keyword>
<keyword id="KW-0808">Transferase</keyword>
<gene>
    <name evidence="7" type="primary">norB</name>
</gene>
<organism>
    <name type="scientific">Streptomyces orinoci</name>
    <name type="common">Streptoverticillium orinoci</name>
    <dbReference type="NCBI Taxonomy" id="67339"/>
    <lineage>
        <taxon>Bacteria</taxon>
        <taxon>Bacillati</taxon>
        <taxon>Actinomycetota</taxon>
        <taxon>Actinomycetes</taxon>
        <taxon>Kitasatosporales</taxon>
        <taxon>Streptomycetaceae</taxon>
        <taxon>Streptomyces</taxon>
    </lineage>
</organism>